<keyword id="KW-0997">Cell inner membrane</keyword>
<keyword id="KW-1003">Cell membrane</keyword>
<keyword id="KW-0406">Ion transport</keyword>
<keyword id="KW-0472">Membrane</keyword>
<keyword id="KW-0520">NAD</keyword>
<keyword id="KW-1185">Reference proteome</keyword>
<keyword id="KW-0915">Sodium</keyword>
<keyword id="KW-0739">Sodium transport</keyword>
<keyword id="KW-1278">Translocase</keyword>
<keyword id="KW-0812">Transmembrane</keyword>
<keyword id="KW-1133">Transmembrane helix</keyword>
<keyword id="KW-0813">Transport</keyword>
<keyword id="KW-0830">Ubiquinone</keyword>
<comment type="function">
    <text evidence="1">NQR complex catalyzes the reduction of ubiquinone-1 to ubiquinol by two successive reactions, coupled with the transport of Na(+) ions from the cytoplasm to the periplasm. NqrA to NqrE are probably involved in the second step, the conversion of ubisemiquinone to ubiquinol.</text>
</comment>
<comment type="catalytic activity">
    <reaction evidence="1">
        <text>a ubiquinone + n Na(+)(in) + NADH + H(+) = a ubiquinol + n Na(+)(out) + NAD(+)</text>
        <dbReference type="Rhea" id="RHEA:47748"/>
        <dbReference type="Rhea" id="RHEA-COMP:9565"/>
        <dbReference type="Rhea" id="RHEA-COMP:9566"/>
        <dbReference type="ChEBI" id="CHEBI:15378"/>
        <dbReference type="ChEBI" id="CHEBI:16389"/>
        <dbReference type="ChEBI" id="CHEBI:17976"/>
        <dbReference type="ChEBI" id="CHEBI:29101"/>
        <dbReference type="ChEBI" id="CHEBI:57540"/>
        <dbReference type="ChEBI" id="CHEBI:57945"/>
        <dbReference type="EC" id="7.2.1.1"/>
    </reaction>
</comment>
<comment type="subunit">
    <text evidence="1">Composed of six subunits; NqrA, NqrB, NqrC, NqrD, NqrE and NqrF.</text>
</comment>
<comment type="subcellular location">
    <subcellularLocation>
        <location evidence="1">Cell inner membrane</location>
        <topology evidence="1">Multi-pass membrane protein</topology>
    </subcellularLocation>
</comment>
<comment type="similarity">
    <text evidence="1">Belongs to the NqrDE/RnfAE family.</text>
</comment>
<accession>Q7UWS1</accession>
<gene>
    <name evidence="1" type="primary">nqrE</name>
    <name type="ordered locus">RB1836</name>
</gene>
<dbReference type="EC" id="7.2.1.1" evidence="1"/>
<dbReference type="EMBL" id="BX294135">
    <property type="protein sequence ID" value="CAD72291.1"/>
    <property type="molecule type" value="Genomic_DNA"/>
</dbReference>
<dbReference type="RefSeq" id="NP_864610.1">
    <property type="nucleotide sequence ID" value="NC_005027.1"/>
</dbReference>
<dbReference type="RefSeq" id="WP_007328966.1">
    <property type="nucleotide sequence ID" value="NC_005027.1"/>
</dbReference>
<dbReference type="SMR" id="Q7UWS1"/>
<dbReference type="FunCoup" id="Q7UWS1">
    <property type="interactions" value="53"/>
</dbReference>
<dbReference type="STRING" id="243090.RB1836"/>
<dbReference type="EnsemblBacteria" id="CAD72291">
    <property type="protein sequence ID" value="CAD72291"/>
    <property type="gene ID" value="RB1836"/>
</dbReference>
<dbReference type="KEGG" id="rba:RB1836"/>
<dbReference type="PATRIC" id="fig|243090.15.peg.844"/>
<dbReference type="eggNOG" id="COG2209">
    <property type="taxonomic scope" value="Bacteria"/>
</dbReference>
<dbReference type="HOGENOM" id="CLU_095255_0_0_0"/>
<dbReference type="InParanoid" id="Q7UWS1"/>
<dbReference type="OrthoDB" id="9803631at2"/>
<dbReference type="Proteomes" id="UP000001025">
    <property type="component" value="Chromosome"/>
</dbReference>
<dbReference type="GO" id="GO:0009276">
    <property type="term" value="C:Gram-negative-bacterium-type cell wall"/>
    <property type="evidence" value="ECO:0007669"/>
    <property type="project" value="InterPro"/>
</dbReference>
<dbReference type="GO" id="GO:0005886">
    <property type="term" value="C:plasma membrane"/>
    <property type="evidence" value="ECO:0000318"/>
    <property type="project" value="GO_Central"/>
</dbReference>
<dbReference type="GO" id="GO:0016655">
    <property type="term" value="F:oxidoreductase activity, acting on NAD(P)H, quinone or similar compound as acceptor"/>
    <property type="evidence" value="ECO:0007669"/>
    <property type="project" value="UniProtKB-UniRule"/>
</dbReference>
<dbReference type="GO" id="GO:0022904">
    <property type="term" value="P:respiratory electron transport chain"/>
    <property type="evidence" value="ECO:0007669"/>
    <property type="project" value="InterPro"/>
</dbReference>
<dbReference type="GO" id="GO:0006814">
    <property type="term" value="P:sodium ion transport"/>
    <property type="evidence" value="ECO:0007669"/>
    <property type="project" value="UniProtKB-UniRule"/>
</dbReference>
<dbReference type="HAMAP" id="MF_00429">
    <property type="entry name" value="NqrE"/>
    <property type="match status" value="1"/>
</dbReference>
<dbReference type="InterPro" id="IPR003667">
    <property type="entry name" value="NqrDE/RnfAE"/>
</dbReference>
<dbReference type="InterPro" id="IPR050133">
    <property type="entry name" value="NqrDE/RnfAE_oxidrdctase"/>
</dbReference>
<dbReference type="InterPro" id="IPR010967">
    <property type="entry name" value="NqrE"/>
</dbReference>
<dbReference type="NCBIfam" id="TIGR01940">
    <property type="entry name" value="nqrE"/>
    <property type="match status" value="1"/>
</dbReference>
<dbReference type="PANTHER" id="PTHR30335">
    <property type="entry name" value="INTEGRAL MEMBRANE PROTEIN OF SOXR-REDUCING COMPLEX"/>
    <property type="match status" value="1"/>
</dbReference>
<dbReference type="PANTHER" id="PTHR30335:SF1">
    <property type="entry name" value="NA(+)-TRANSLOCATING NADH-QUINONE REDUCTASE SUBUNIT E"/>
    <property type="match status" value="1"/>
</dbReference>
<dbReference type="Pfam" id="PF02508">
    <property type="entry name" value="Rnf-Nqr"/>
    <property type="match status" value="1"/>
</dbReference>
<dbReference type="PIRSF" id="PIRSF006102">
    <property type="entry name" value="NQR_DE"/>
    <property type="match status" value="1"/>
</dbReference>
<name>NQRE_RHOBA</name>
<reference key="1">
    <citation type="journal article" date="2003" name="Proc. Natl. Acad. Sci. U.S.A.">
        <title>Complete genome sequence of the marine planctomycete Pirellula sp. strain 1.</title>
        <authorList>
            <person name="Gloeckner F.O."/>
            <person name="Kube M."/>
            <person name="Bauer M."/>
            <person name="Teeling H."/>
            <person name="Lombardot T."/>
            <person name="Ludwig W."/>
            <person name="Gade D."/>
            <person name="Beck A."/>
            <person name="Borzym K."/>
            <person name="Heitmann K."/>
            <person name="Rabus R."/>
            <person name="Schlesner H."/>
            <person name="Amann R."/>
            <person name="Reinhardt R."/>
        </authorList>
    </citation>
    <scope>NUCLEOTIDE SEQUENCE [LARGE SCALE GENOMIC DNA]</scope>
    <source>
        <strain>DSM 10527 / NCIMB 13988 / SH1</strain>
    </source>
</reference>
<proteinExistence type="inferred from homology"/>
<feature type="chain" id="PRO_0000227021" description="Na(+)-translocating NADH-quinone reductase subunit E">
    <location>
        <begin position="1"/>
        <end position="213"/>
    </location>
</feature>
<feature type="transmembrane region" description="Helical" evidence="1">
    <location>
        <begin position="12"/>
        <end position="32"/>
    </location>
</feature>
<feature type="transmembrane region" description="Helical" evidence="1">
    <location>
        <begin position="40"/>
        <end position="60"/>
    </location>
</feature>
<feature type="transmembrane region" description="Helical" evidence="1">
    <location>
        <begin position="92"/>
        <end position="112"/>
    </location>
</feature>
<feature type="transmembrane region" description="Helical" evidence="1">
    <location>
        <begin position="124"/>
        <end position="144"/>
    </location>
</feature>
<feature type="transmembrane region" description="Helical" evidence="1">
    <location>
        <begin position="155"/>
        <end position="175"/>
    </location>
</feature>
<feature type="transmembrane region" description="Helical" evidence="1">
    <location>
        <begin position="191"/>
        <end position="211"/>
    </location>
</feature>
<evidence type="ECO:0000255" key="1">
    <source>
        <dbReference type="HAMAP-Rule" id="MF_00429"/>
    </source>
</evidence>
<sequence length="213" mass="23262">MVEQYLSVFLKAVFVENLALAFFLGMCTFLAVSKNVKTAIGLGIAVIAIETITVPANQLIYSLLLKKGALTWVNDYLISTDTYNFAEVDLTFLGFISYIGVIAAMVQILEMFLDRFMPSLYNALGIFLPLITVNCAILGASLFMEQREYPFGESVVFGFGCGVGWALAIMALAGIREKLKYSDVPPPLRGLGITFITVGLMSLAFMSFSGIQL</sequence>
<protein>
    <recommendedName>
        <fullName evidence="1">Na(+)-translocating NADH-quinone reductase subunit E</fullName>
        <shortName evidence="1">Na(+)-NQR subunit E</shortName>
        <shortName evidence="1">Na(+)-translocating NQR subunit E</shortName>
        <ecNumber evidence="1">7.2.1.1</ecNumber>
    </recommendedName>
    <alternativeName>
        <fullName evidence="1">NQR complex subunit E</fullName>
    </alternativeName>
    <alternativeName>
        <fullName evidence="1">NQR-1 subunit E</fullName>
    </alternativeName>
</protein>
<organism>
    <name type="scientific">Rhodopirellula baltica (strain DSM 10527 / NCIMB 13988 / SH1)</name>
    <dbReference type="NCBI Taxonomy" id="243090"/>
    <lineage>
        <taxon>Bacteria</taxon>
        <taxon>Pseudomonadati</taxon>
        <taxon>Planctomycetota</taxon>
        <taxon>Planctomycetia</taxon>
        <taxon>Pirellulales</taxon>
        <taxon>Pirellulaceae</taxon>
        <taxon>Rhodopirellula</taxon>
    </lineage>
</organism>